<evidence type="ECO:0000255" key="1">
    <source>
        <dbReference type="HAMAP-Rule" id="MF_00719"/>
    </source>
</evidence>
<feature type="chain" id="PRO_1000083257" description="Adenosylcobinamide-GDP ribazoletransferase">
    <location>
        <begin position="1"/>
        <end position="243"/>
    </location>
</feature>
<feature type="transmembrane region" description="Helical" evidence="1">
    <location>
        <begin position="29"/>
        <end position="49"/>
    </location>
</feature>
<feature type="transmembrane region" description="Helical" evidence="1">
    <location>
        <begin position="54"/>
        <end position="74"/>
    </location>
</feature>
<feature type="transmembrane region" description="Helical" evidence="1">
    <location>
        <begin position="107"/>
        <end position="127"/>
    </location>
</feature>
<feature type="transmembrane region" description="Helical" evidence="1">
    <location>
        <begin position="129"/>
        <end position="149"/>
    </location>
</feature>
<feature type="transmembrane region" description="Helical" evidence="1">
    <location>
        <begin position="161"/>
        <end position="181"/>
    </location>
</feature>
<feature type="transmembrane region" description="Helical" evidence="1">
    <location>
        <begin position="192"/>
        <end position="212"/>
    </location>
</feature>
<reference key="1">
    <citation type="submission" date="2007-04" db="EMBL/GenBank/DDBJ databases">
        <title>Complete sequence of chromosome of Mycobacterium gilvum PYR-GCK.</title>
        <authorList>
            <consortium name="US DOE Joint Genome Institute"/>
            <person name="Copeland A."/>
            <person name="Lucas S."/>
            <person name="Lapidus A."/>
            <person name="Barry K."/>
            <person name="Detter J.C."/>
            <person name="Glavina del Rio T."/>
            <person name="Hammon N."/>
            <person name="Israni S."/>
            <person name="Dalin E."/>
            <person name="Tice H."/>
            <person name="Pitluck S."/>
            <person name="Chain P."/>
            <person name="Malfatti S."/>
            <person name="Shin M."/>
            <person name="Vergez L."/>
            <person name="Schmutz J."/>
            <person name="Larimer F."/>
            <person name="Land M."/>
            <person name="Hauser L."/>
            <person name="Kyrpides N."/>
            <person name="Mikhailova N."/>
            <person name="Miller C."/>
            <person name="Richardson P."/>
        </authorList>
    </citation>
    <scope>NUCLEOTIDE SEQUENCE [LARGE SCALE GENOMIC DNA]</scope>
    <source>
        <strain>PYR-GCK</strain>
    </source>
</reference>
<accession>A4TBJ8</accession>
<name>COBS_MYCGI</name>
<proteinExistence type="inferred from homology"/>
<keyword id="KW-1003">Cell membrane</keyword>
<keyword id="KW-0169">Cobalamin biosynthesis</keyword>
<keyword id="KW-0460">Magnesium</keyword>
<keyword id="KW-0472">Membrane</keyword>
<keyword id="KW-0808">Transferase</keyword>
<keyword id="KW-0812">Transmembrane</keyword>
<keyword id="KW-1133">Transmembrane helix</keyword>
<gene>
    <name evidence="1" type="primary">cobS</name>
    <name type="ordered locus">Mflv_2941</name>
</gene>
<sequence>MTRSLAGAFAFATVMPVPSRRAAIAGRGVLTALPVVGLVLGSAAAAVCWLGTRAFGSGSVLAGALTVAVLLLATRGLHIDGLSDTTDALGCYGPAERALAVMRDGRAGPFGVAAVAVTVVIQSVAFSQAGWAAVLVAVAAGRVAVVVACRRGVPAAEGSTLGALVAGTQPLWVAAAWLVAIAGLATLAGERAWQGPLAVVVAVACSVVMVAHCVRRFGGITGDVLGAAVEVTTTVTALGLAIA</sequence>
<dbReference type="EC" id="2.7.8.26" evidence="1"/>
<dbReference type="EMBL" id="CP000656">
    <property type="protein sequence ID" value="ABP45418.1"/>
    <property type="molecule type" value="Genomic_DNA"/>
</dbReference>
<dbReference type="STRING" id="350054.Mflv_2941"/>
<dbReference type="KEGG" id="mgi:Mflv_2941"/>
<dbReference type="eggNOG" id="COG0368">
    <property type="taxonomic scope" value="Bacteria"/>
</dbReference>
<dbReference type="HOGENOM" id="CLU_057426_0_2_11"/>
<dbReference type="OrthoDB" id="9794223at2"/>
<dbReference type="UniPathway" id="UPA00148">
    <property type="reaction ID" value="UER00238"/>
</dbReference>
<dbReference type="GO" id="GO:0005886">
    <property type="term" value="C:plasma membrane"/>
    <property type="evidence" value="ECO:0007669"/>
    <property type="project" value="UniProtKB-SubCell"/>
</dbReference>
<dbReference type="GO" id="GO:0051073">
    <property type="term" value="F:adenosylcobinamide-GDP ribazoletransferase activity"/>
    <property type="evidence" value="ECO:0007669"/>
    <property type="project" value="UniProtKB-UniRule"/>
</dbReference>
<dbReference type="GO" id="GO:0008818">
    <property type="term" value="F:cobalamin 5'-phosphate synthase activity"/>
    <property type="evidence" value="ECO:0007669"/>
    <property type="project" value="UniProtKB-UniRule"/>
</dbReference>
<dbReference type="GO" id="GO:0009236">
    <property type="term" value="P:cobalamin biosynthetic process"/>
    <property type="evidence" value="ECO:0007669"/>
    <property type="project" value="UniProtKB-UniRule"/>
</dbReference>
<dbReference type="HAMAP" id="MF_00719">
    <property type="entry name" value="CobS"/>
    <property type="match status" value="1"/>
</dbReference>
<dbReference type="InterPro" id="IPR003805">
    <property type="entry name" value="CobS"/>
</dbReference>
<dbReference type="NCBIfam" id="NF001279">
    <property type="entry name" value="PRK00235.2-1"/>
    <property type="match status" value="1"/>
</dbReference>
<dbReference type="PANTHER" id="PTHR34148">
    <property type="entry name" value="ADENOSYLCOBINAMIDE-GDP RIBAZOLETRANSFERASE"/>
    <property type="match status" value="1"/>
</dbReference>
<dbReference type="PANTHER" id="PTHR34148:SF1">
    <property type="entry name" value="ADENOSYLCOBINAMIDE-GDP RIBAZOLETRANSFERASE"/>
    <property type="match status" value="1"/>
</dbReference>
<dbReference type="Pfam" id="PF02654">
    <property type="entry name" value="CobS"/>
    <property type="match status" value="1"/>
</dbReference>
<comment type="function">
    <text evidence="1">Joins adenosylcobinamide-GDP and alpha-ribazole to generate adenosylcobalamin (Ado-cobalamin). Also synthesizes adenosylcobalamin 5'-phosphate from adenosylcobinamide-GDP and alpha-ribazole 5'-phosphate.</text>
</comment>
<comment type="catalytic activity">
    <reaction evidence="1">
        <text>alpha-ribazole + adenosylcob(III)inamide-GDP = adenosylcob(III)alamin + GMP + H(+)</text>
        <dbReference type="Rhea" id="RHEA:16049"/>
        <dbReference type="ChEBI" id="CHEBI:10329"/>
        <dbReference type="ChEBI" id="CHEBI:15378"/>
        <dbReference type="ChEBI" id="CHEBI:18408"/>
        <dbReference type="ChEBI" id="CHEBI:58115"/>
        <dbReference type="ChEBI" id="CHEBI:60487"/>
        <dbReference type="EC" id="2.7.8.26"/>
    </reaction>
</comment>
<comment type="catalytic activity">
    <reaction evidence="1">
        <text>alpha-ribazole 5'-phosphate + adenosylcob(III)inamide-GDP = adenosylcob(III)alamin 5'-phosphate + GMP + H(+)</text>
        <dbReference type="Rhea" id="RHEA:23560"/>
        <dbReference type="ChEBI" id="CHEBI:15378"/>
        <dbReference type="ChEBI" id="CHEBI:57918"/>
        <dbReference type="ChEBI" id="CHEBI:58115"/>
        <dbReference type="ChEBI" id="CHEBI:60487"/>
        <dbReference type="ChEBI" id="CHEBI:60493"/>
        <dbReference type="EC" id="2.7.8.26"/>
    </reaction>
</comment>
<comment type="cofactor">
    <cofactor evidence="1">
        <name>Mg(2+)</name>
        <dbReference type="ChEBI" id="CHEBI:18420"/>
    </cofactor>
</comment>
<comment type="pathway">
    <text evidence="1">Cofactor biosynthesis; adenosylcobalamin biosynthesis; adenosylcobalamin from cob(II)yrinate a,c-diamide: step 7/7.</text>
</comment>
<comment type="subcellular location">
    <subcellularLocation>
        <location evidence="1">Cell membrane</location>
        <topology evidence="1">Multi-pass membrane protein</topology>
    </subcellularLocation>
</comment>
<comment type="similarity">
    <text evidence="1">Belongs to the CobS family.</text>
</comment>
<protein>
    <recommendedName>
        <fullName evidence="1">Adenosylcobinamide-GDP ribazoletransferase</fullName>
        <ecNumber evidence="1">2.7.8.26</ecNumber>
    </recommendedName>
    <alternativeName>
        <fullName evidence="1">Cobalamin synthase</fullName>
    </alternativeName>
    <alternativeName>
        <fullName evidence="1">Cobalamin-5'-phosphate synthase</fullName>
    </alternativeName>
</protein>
<organism>
    <name type="scientific">Mycolicibacterium gilvum (strain PYR-GCK)</name>
    <name type="common">Mycobacterium gilvum (strain PYR-GCK)</name>
    <dbReference type="NCBI Taxonomy" id="350054"/>
    <lineage>
        <taxon>Bacteria</taxon>
        <taxon>Bacillati</taxon>
        <taxon>Actinomycetota</taxon>
        <taxon>Actinomycetes</taxon>
        <taxon>Mycobacteriales</taxon>
        <taxon>Mycobacteriaceae</taxon>
        <taxon>Mycolicibacterium</taxon>
    </lineage>
</organism>